<name>TPS25_ARATH</name>
<evidence type="ECO:0000250" key="1">
    <source>
        <dbReference type="UniProtKB" id="Q40577"/>
    </source>
</evidence>
<evidence type="ECO:0000269" key="2">
    <source>
    </source>
</evidence>
<evidence type="ECO:0000269" key="3">
    <source>
    </source>
</evidence>
<evidence type="ECO:0000303" key="4">
    <source>
    </source>
</evidence>
<evidence type="ECO:0000305" key="5"/>
<evidence type="ECO:0000312" key="6">
    <source>
        <dbReference type="Araport" id="AT3G29410"/>
    </source>
</evidence>
<evidence type="ECO:0000312" key="7">
    <source>
        <dbReference type="EMBL" id="BAB02588.1"/>
    </source>
</evidence>
<accession>Q9LIA1</accession>
<accession>Q84UU7</accession>
<dbReference type="EC" id="4.2.3.-"/>
<dbReference type="EMBL" id="AF497488">
    <property type="protein sequence ID" value="AAO85536.1"/>
    <property type="molecule type" value="mRNA"/>
</dbReference>
<dbReference type="EMBL" id="AP001309">
    <property type="protein sequence ID" value="BAB02588.1"/>
    <property type="status" value="ALT_SEQ"/>
    <property type="molecule type" value="Genomic_DNA"/>
</dbReference>
<dbReference type="EMBL" id="CP002686">
    <property type="protein sequence ID" value="AEE77582.1"/>
    <property type="molecule type" value="Genomic_DNA"/>
</dbReference>
<dbReference type="EMBL" id="BX822709">
    <property type="status" value="NOT_ANNOTATED_CDS"/>
    <property type="molecule type" value="mRNA"/>
</dbReference>
<dbReference type="RefSeq" id="NP_189587.1">
    <property type="nucleotide sequence ID" value="NM_113867.5"/>
</dbReference>
<dbReference type="SMR" id="Q9LIA1"/>
<dbReference type="FunCoup" id="Q9LIA1">
    <property type="interactions" value="70"/>
</dbReference>
<dbReference type="STRING" id="3702.Q9LIA1"/>
<dbReference type="PaxDb" id="3702-AT3G29410.1"/>
<dbReference type="ProteomicsDB" id="232497"/>
<dbReference type="EnsemblPlants" id="AT3G29410.1">
    <property type="protein sequence ID" value="AT3G29410.1"/>
    <property type="gene ID" value="AT3G29410"/>
</dbReference>
<dbReference type="GeneID" id="822602"/>
<dbReference type="Gramene" id="AT3G29410.1">
    <property type="protein sequence ID" value="AT3G29410.1"/>
    <property type="gene ID" value="AT3G29410"/>
</dbReference>
<dbReference type="KEGG" id="ath:AT3G29410"/>
<dbReference type="Araport" id="AT3G29410"/>
<dbReference type="TAIR" id="AT3G29410">
    <property type="gene designation" value="TPS25"/>
</dbReference>
<dbReference type="eggNOG" id="ENOG502QUCN">
    <property type="taxonomic scope" value="Eukaryota"/>
</dbReference>
<dbReference type="HOGENOM" id="CLU_003125_7_2_1"/>
<dbReference type="InParanoid" id="Q9LIA1"/>
<dbReference type="PhylomeDB" id="Q9LIA1"/>
<dbReference type="BioCyc" id="ARA:AT3G29410-MONOMER"/>
<dbReference type="UniPathway" id="UPA00213"/>
<dbReference type="PRO" id="PR:Q9LIA1"/>
<dbReference type="Proteomes" id="UP000006548">
    <property type="component" value="Chromosome 3"/>
</dbReference>
<dbReference type="ExpressionAtlas" id="Q9LIA1">
    <property type="expression patterns" value="baseline and differential"/>
</dbReference>
<dbReference type="GO" id="GO:0005737">
    <property type="term" value="C:cytoplasm"/>
    <property type="evidence" value="ECO:0007669"/>
    <property type="project" value="UniProtKB-SubCell"/>
</dbReference>
<dbReference type="GO" id="GO:0000287">
    <property type="term" value="F:magnesium ion binding"/>
    <property type="evidence" value="ECO:0007669"/>
    <property type="project" value="InterPro"/>
</dbReference>
<dbReference type="GO" id="GO:0010333">
    <property type="term" value="F:terpene synthase activity"/>
    <property type="evidence" value="ECO:0000314"/>
    <property type="project" value="UniProtKB"/>
</dbReference>
<dbReference type="GO" id="GO:0016102">
    <property type="term" value="P:diterpenoid biosynthetic process"/>
    <property type="evidence" value="ECO:0007669"/>
    <property type="project" value="InterPro"/>
</dbReference>
<dbReference type="GO" id="GO:0016114">
    <property type="term" value="P:terpenoid biosynthetic process"/>
    <property type="evidence" value="ECO:0000314"/>
    <property type="project" value="UniProtKB"/>
</dbReference>
<dbReference type="CDD" id="cd00684">
    <property type="entry name" value="Terpene_cyclase_plant_C1"/>
    <property type="match status" value="1"/>
</dbReference>
<dbReference type="FunFam" id="1.10.600.10:FF:000007">
    <property type="entry name" value="Isoprene synthase, chloroplastic"/>
    <property type="match status" value="1"/>
</dbReference>
<dbReference type="FunFam" id="1.50.10.130:FF:000001">
    <property type="entry name" value="Isoprene synthase, chloroplastic"/>
    <property type="match status" value="1"/>
</dbReference>
<dbReference type="Gene3D" id="1.10.600.10">
    <property type="entry name" value="Farnesyl Diphosphate Synthase"/>
    <property type="match status" value="1"/>
</dbReference>
<dbReference type="Gene3D" id="1.50.10.130">
    <property type="entry name" value="Terpene synthase, N-terminal domain"/>
    <property type="match status" value="1"/>
</dbReference>
<dbReference type="InterPro" id="IPR008949">
    <property type="entry name" value="Isoprenoid_synthase_dom_sf"/>
</dbReference>
<dbReference type="InterPro" id="IPR034741">
    <property type="entry name" value="Terpene_cyclase-like_1_C"/>
</dbReference>
<dbReference type="InterPro" id="IPR044814">
    <property type="entry name" value="Terpene_cyclase_plant_C1"/>
</dbReference>
<dbReference type="InterPro" id="IPR001906">
    <property type="entry name" value="Terpene_synth_N"/>
</dbReference>
<dbReference type="InterPro" id="IPR036965">
    <property type="entry name" value="Terpene_synth_N_sf"/>
</dbReference>
<dbReference type="InterPro" id="IPR050148">
    <property type="entry name" value="Terpene_synthase-like"/>
</dbReference>
<dbReference type="InterPro" id="IPR005630">
    <property type="entry name" value="Terpene_synthase_metal-bd"/>
</dbReference>
<dbReference type="InterPro" id="IPR008930">
    <property type="entry name" value="Terpenoid_cyclase/PrenylTrfase"/>
</dbReference>
<dbReference type="PANTHER" id="PTHR31225:SF93">
    <property type="entry name" value="ALPHA-HUMULENE_(-)-(E)-BETA-CARYOPHYLLENE SYNTHASE"/>
    <property type="match status" value="1"/>
</dbReference>
<dbReference type="PANTHER" id="PTHR31225">
    <property type="entry name" value="OS04G0344100 PROTEIN-RELATED"/>
    <property type="match status" value="1"/>
</dbReference>
<dbReference type="Pfam" id="PF01397">
    <property type="entry name" value="Terpene_synth"/>
    <property type="match status" value="1"/>
</dbReference>
<dbReference type="Pfam" id="PF03936">
    <property type="entry name" value="Terpene_synth_C"/>
    <property type="match status" value="1"/>
</dbReference>
<dbReference type="SFLD" id="SFLDS00005">
    <property type="entry name" value="Isoprenoid_Synthase_Type_I"/>
    <property type="match status" value="1"/>
</dbReference>
<dbReference type="SFLD" id="SFLDG01019">
    <property type="entry name" value="Terpene_Cyclase_Like_1_C_Termi"/>
    <property type="match status" value="1"/>
</dbReference>
<dbReference type="SUPFAM" id="SSF48239">
    <property type="entry name" value="Terpenoid cyclases/Protein prenyltransferases"/>
    <property type="match status" value="1"/>
</dbReference>
<dbReference type="SUPFAM" id="SSF48576">
    <property type="entry name" value="Terpenoid synthases"/>
    <property type="match status" value="1"/>
</dbReference>
<reference key="1">
    <citation type="journal article" date="2003" name="Plant Cell">
        <title>Biosynthesis and emission of terpenoid volatiles from Arabidopsis flowers.</title>
        <authorList>
            <person name="Chen F."/>
            <person name="Tholl D."/>
            <person name="D'Auria J.C."/>
            <person name="Farooq A."/>
            <person name="Pichersky E."/>
            <person name="Gershenzon J."/>
        </authorList>
    </citation>
    <scope>NUCLEOTIDE SEQUENCE [MRNA]</scope>
    <scope>TISSUE SPECIFICITY</scope>
    <source>
        <strain>cv. Landsberg erecta</strain>
    </source>
</reference>
<reference key="2">
    <citation type="journal article" date="2000" name="DNA Res.">
        <title>Structural analysis of Arabidopsis thaliana chromosome 3. II. Sequence features of the 4,251,695 bp regions covered by 90 P1, TAC and BAC clones.</title>
        <authorList>
            <person name="Kaneko T."/>
            <person name="Katoh T."/>
            <person name="Sato S."/>
            <person name="Nakamura Y."/>
            <person name="Asamizu E."/>
            <person name="Tabata S."/>
        </authorList>
    </citation>
    <scope>NUCLEOTIDE SEQUENCE [LARGE SCALE GENOMIC DNA]</scope>
    <source>
        <strain>cv. Columbia</strain>
    </source>
</reference>
<reference key="3">
    <citation type="journal article" date="2017" name="Plant J.">
        <title>Araport11: a complete reannotation of the Arabidopsis thaliana reference genome.</title>
        <authorList>
            <person name="Cheng C.Y."/>
            <person name="Krishnakumar V."/>
            <person name="Chan A.P."/>
            <person name="Thibaud-Nissen F."/>
            <person name="Schobel S."/>
            <person name="Town C.D."/>
        </authorList>
    </citation>
    <scope>GENOME REANNOTATION</scope>
    <source>
        <strain>cv. Columbia</strain>
    </source>
</reference>
<reference key="4">
    <citation type="journal article" date="2004" name="Genome Res.">
        <title>Whole genome sequence comparisons and 'full-length' cDNA sequences: a combined approach to evaluate and improve Arabidopsis genome annotation.</title>
        <authorList>
            <person name="Castelli V."/>
            <person name="Aury J.-M."/>
            <person name="Jaillon O."/>
            <person name="Wincker P."/>
            <person name="Clepet C."/>
            <person name="Menard M."/>
            <person name="Cruaud C."/>
            <person name="Quetier F."/>
            <person name="Scarpelli C."/>
            <person name="Schaechter V."/>
            <person name="Temple G."/>
            <person name="Caboche M."/>
            <person name="Weissenbach J."/>
            <person name="Salanoubat M."/>
        </authorList>
    </citation>
    <scope>NUCLEOTIDE SEQUENCE [LARGE SCALE MRNA]</scope>
    <source>
        <strain>cv. Columbia</strain>
    </source>
</reference>
<reference key="5">
    <citation type="journal article" date="2002" name="Mol. Genet. Genomics">
        <title>Genomic analysis of the terpenoid synthase (AtTPS) gene family of Arabidopsis thaliana.</title>
        <authorList>
            <person name="Aubourg S."/>
            <person name="Lecharny A."/>
            <person name="Bohlmann J."/>
        </authorList>
    </citation>
    <scope>GENE FAMILY</scope>
    <scope>NOMENCLATURE</scope>
</reference>
<reference key="6">
    <citation type="journal article" date="2003" name="Plant Mol. Biol.">
        <title>Genome organization in Arabidopsis thaliana: a survey for genes involved in isoprenoid and chlorophyll metabolism.</title>
        <authorList>
            <person name="Lange B.M."/>
            <person name="Ghassemian M."/>
        </authorList>
    </citation>
    <scope>GENE FAMILY</scope>
</reference>
<reference key="7">
    <citation type="journal article" date="2016" name="Front. Plant Sci.">
        <title>Identification of a dolabellane type diterpene synthase and other root-expressed diterpene synthases in Arabidopsis.</title>
        <authorList>
            <person name="Wang Q."/>
            <person name="Jia M."/>
            <person name="Huh J.H."/>
            <person name="Muchlinski A."/>
            <person name="Peters R.J."/>
            <person name="Tholl D."/>
        </authorList>
    </citation>
    <scope>FUNCTION</scope>
    <source>
        <strain>cv. Columbia</strain>
    </source>
</reference>
<proteinExistence type="evidence at transcript level"/>
<sequence>MEASKCFGPRTLPIIHNVPLCLKTNFSLFPCRLLQSQSLSSKKSTKHYLFRVKAETSGDLESTRPLTYFSPSYWGDHFLSVSIDDSEFEALEKEIETVFKPKVRDMLMSPHSSDKERIRLIHLLISLGIAYYYENEIEEILHKAYGKLACLISDEDDLETIAIMFEVFRLYGHKMPCDVFERFKSEDGKFKESLVGDVRGLLQLYEAAHLGAPSEDIMDEALSFARYHLEPLAGTETSSNLFKHVENVLYRARYHSIEILVARQYISFYDQEEDQDETLLRFSKLNFNFCQMHYVKELKIVTRWWKELGIASKLPYSIRERNVETYLGGLGVLFEPRYSLARIFLAKLTLIMTVVDDTCDAYATLPEVQSLHDAFHRWDLRAMEELPRYMRIIYQSVFETVEDIDREMIARGKHGRLQLTIDEIKSLMIWYLGIAKWARSDQVPSFEDYMEIGTPSSALDDFASYGFIAMDDCDQKQLKEWFYSKPKIFHALNALFRIRNDIVTFEQEMSRGEVANGVNCYMKQHGVTKEAAVEELRKMERESYKIMIEEFMTSKAMPRQILVRPVNIARVMDLFYKEADGFGHPDQKLLQLIASLFLHPIPL</sequence>
<comment type="function">
    <text evidence="3">Involved in terpene biosynthesis in roots. Possesses sesquiterpene (C15) synthase activity in vitro. Does not seem to be involved in diterpene (C20) biosynthesis.</text>
</comment>
<comment type="cofactor">
    <cofactor evidence="1">
        <name>Mg(2+)</name>
        <dbReference type="ChEBI" id="CHEBI:18420"/>
    </cofactor>
    <cofactor evidence="1">
        <name>Mn(2+)</name>
        <dbReference type="ChEBI" id="CHEBI:29035"/>
    </cofactor>
    <text evidence="1">Binds 3 Mg(2+) or Mn(2+) ions per subunit.</text>
</comment>
<comment type="pathway">
    <text evidence="5">Secondary metabolite biosynthesis; terpenoid biosynthesis.</text>
</comment>
<comment type="subcellular location">
    <subcellularLocation>
        <location evidence="5">Cytoplasm</location>
    </subcellularLocation>
</comment>
<comment type="tissue specificity">
    <text evidence="2">Predominantly expressed in roots but also in flowers.</text>
</comment>
<comment type="domain">
    <text evidence="5">The Asp-Asp-Xaa-Xaa-Asp/Glu (DDXXD/E) motif is important for the catalytic activity, presumably through binding to Mg(2+).</text>
</comment>
<comment type="similarity">
    <text evidence="5">Belongs to the terpene synthase family. Tpsa subfamily.</text>
</comment>
<comment type="sequence caution" evidence="5">
    <conflict type="erroneous gene model prediction">
        <sequence resource="EMBL-CDS" id="BAB02588"/>
    </conflict>
</comment>
<comment type="sequence caution" evidence="5">
    <conflict type="frameshift">
        <sequence resource="EMBL" id="BX822709"/>
    </conflict>
</comment>
<gene>
    <name evidence="4" type="primary">TPS25</name>
    <name evidence="6" type="ordered locus">At3g29410</name>
    <name evidence="7" type="ORF">MUO10.2</name>
</gene>
<feature type="chain" id="PRO_0000403713" description="Terpenoid synthase 25">
    <location>
        <begin position="1"/>
        <end position="603"/>
    </location>
</feature>
<feature type="short sequence motif" description="DDXXD motif" evidence="5">
    <location>
        <begin position="356"/>
        <end position="360"/>
    </location>
</feature>
<feature type="binding site" evidence="1">
    <location>
        <position position="356"/>
    </location>
    <ligand>
        <name>Mg(2+)</name>
        <dbReference type="ChEBI" id="CHEBI:18420"/>
        <label>1</label>
    </ligand>
</feature>
<feature type="binding site" evidence="1">
    <location>
        <position position="356"/>
    </location>
    <ligand>
        <name>Mg(2+)</name>
        <dbReference type="ChEBI" id="CHEBI:18420"/>
        <label>2</label>
    </ligand>
</feature>
<feature type="binding site" evidence="1">
    <location>
        <position position="360"/>
    </location>
    <ligand>
        <name>Mg(2+)</name>
        <dbReference type="ChEBI" id="CHEBI:18420"/>
        <label>1</label>
    </ligand>
</feature>
<feature type="binding site" evidence="1">
    <location>
        <position position="360"/>
    </location>
    <ligand>
        <name>Mg(2+)</name>
        <dbReference type="ChEBI" id="CHEBI:18420"/>
        <label>2</label>
    </ligand>
</feature>
<feature type="binding site" evidence="1">
    <location>
        <position position="500"/>
    </location>
    <ligand>
        <name>Mg(2+)</name>
        <dbReference type="ChEBI" id="CHEBI:18420"/>
        <label>3</label>
    </ligand>
</feature>
<feature type="binding site" evidence="1">
    <location>
        <position position="504"/>
    </location>
    <ligand>
        <name>Mg(2+)</name>
        <dbReference type="ChEBI" id="CHEBI:18420"/>
        <label>3</label>
    </ligand>
</feature>
<feature type="binding site" evidence="1">
    <location>
        <position position="508"/>
    </location>
    <ligand>
        <name>Mg(2+)</name>
        <dbReference type="ChEBI" id="CHEBI:18420"/>
        <label>3</label>
    </ligand>
</feature>
<feature type="sequence conflict" description="In Ref. 1; AAO85536." evidence="5" ref="1">
    <original>CR</original>
    <variation>RC</variation>
    <location>
        <begin position="31"/>
        <end position="32"/>
    </location>
</feature>
<feature type="sequence conflict" description="In Ref. 1; AAO85536." evidence="5" ref="1">
    <original>Y</original>
    <variation>D</variation>
    <location>
        <position position="48"/>
    </location>
</feature>
<feature type="sequence conflict" description="In Ref. 1; AAO85536." evidence="5" ref="1">
    <original>S</original>
    <variation>N</variation>
    <location>
        <position position="62"/>
    </location>
</feature>
<feature type="sequence conflict" description="In Ref. 1; AAO85536." evidence="5" ref="1">
    <original>FSPSY</original>
    <variation>YSPSL</variation>
    <location>
        <begin position="69"/>
        <end position="73"/>
    </location>
</feature>
<feature type="sequence conflict" description="In Ref. 1; AAO85536." evidence="5" ref="1">
    <original>SIDDSE</original>
    <variation>PIDESK</variation>
    <location>
        <begin position="82"/>
        <end position="87"/>
    </location>
</feature>
<feature type="sequence conflict" description="In Ref. 1; AAO85536." evidence="5" ref="1">
    <original>T</original>
    <variation>S</variation>
    <location>
        <position position="97"/>
    </location>
</feature>
<feature type="sequence conflict" description="In Ref. 1; AAO85536." evidence="5" ref="1">
    <original>L</original>
    <variation>M</variation>
    <location>
        <position position="204"/>
    </location>
</feature>
<feature type="sequence conflict" description="In Ref. 1; AAO85536." evidence="5" ref="1">
    <original>PLAGT</original>
    <variation>SLVSH</variation>
    <location>
        <begin position="231"/>
        <end position="235"/>
    </location>
</feature>
<feature type="sequence conflict" description="In Ref. 1; AAO85536." evidence="5" ref="1">
    <original>KHVENV</original>
    <variation>NHVQNE</variation>
    <location>
        <begin position="243"/>
        <end position="248"/>
    </location>
</feature>
<feature type="sequence conflict" description="In Ref. 1; AAO85536." evidence="5" ref="1">
    <original>D</original>
    <variation>E</variation>
    <location>
        <position position="270"/>
    </location>
</feature>
<feature type="sequence conflict" description="In Ref. 1; AAO85536." evidence="5" ref="1">
    <original>Q</original>
    <variation>H</variation>
    <location>
        <position position="275"/>
    </location>
</feature>
<feature type="sequence conflict" description="In Ref. 1; AAO85536." evidence="5" ref="1">
    <original>E</original>
    <variation>D</variation>
    <location>
        <position position="297"/>
    </location>
</feature>
<feature type="sequence conflict" description="In Ref. 1; AAO85536." evidence="5" ref="1">
    <original>TYLGGLGVL</original>
    <variation>VYLGSLGMF</variation>
    <location>
        <begin position="325"/>
        <end position="333"/>
    </location>
</feature>
<feature type="sequence conflict" description="In Ref. 1; AAO85536." evidence="5" ref="1">
    <original>L</original>
    <variation>S</variation>
    <location>
        <position position="345"/>
    </location>
</feature>
<feature type="sequence conflict" description="In Ref. 1; AAO85536." evidence="5" ref="1">
    <original>LIM</original>
    <variation>MIL</variation>
    <location>
        <begin position="350"/>
        <end position="352"/>
    </location>
</feature>
<feature type="sequence conflict" description="In Ref. 1; AAO85536." evidence="5" ref="1">
    <original>A</original>
    <variation>S</variation>
    <location>
        <position position="361"/>
    </location>
</feature>
<feature type="sequence conflict" description="In Ref. 1; AAO85536." evidence="5" ref="1">
    <original>Q</original>
    <variation>K</variation>
    <location>
        <position position="369"/>
    </location>
</feature>
<feature type="sequence conflict" description="In Ref. 1; AAO85536." evidence="5" ref="1">
    <original>F</original>
    <variation>L</variation>
    <location>
        <position position="462"/>
    </location>
</feature>
<feature type="sequence conflict" description="In Ref. 1; AAO85536." evidence="5" ref="1">
    <original>Q</original>
    <variation>K</variation>
    <location>
        <position position="477"/>
    </location>
</feature>
<feature type="sequence conflict" description="In Ref. 1; AAO85536." evidence="5" ref="1">
    <original>S</original>
    <variation>N</variation>
    <location>
        <position position="543"/>
    </location>
</feature>
<feature type="sequence conflict" description="In Ref. 1; AAO85536." evidence="5" ref="1">
    <original>F</original>
    <variation>Y</variation>
    <location>
        <position position="575"/>
    </location>
</feature>
<organism>
    <name type="scientific">Arabidopsis thaliana</name>
    <name type="common">Mouse-ear cress</name>
    <dbReference type="NCBI Taxonomy" id="3702"/>
    <lineage>
        <taxon>Eukaryota</taxon>
        <taxon>Viridiplantae</taxon>
        <taxon>Streptophyta</taxon>
        <taxon>Embryophyta</taxon>
        <taxon>Tracheophyta</taxon>
        <taxon>Spermatophyta</taxon>
        <taxon>Magnoliopsida</taxon>
        <taxon>eudicotyledons</taxon>
        <taxon>Gunneridae</taxon>
        <taxon>Pentapetalae</taxon>
        <taxon>rosids</taxon>
        <taxon>malvids</taxon>
        <taxon>Brassicales</taxon>
        <taxon>Brassicaceae</taxon>
        <taxon>Camelineae</taxon>
        <taxon>Arabidopsis</taxon>
    </lineage>
</organism>
<protein>
    <recommendedName>
        <fullName evidence="4">Terpenoid synthase 25</fullName>
        <shortName evidence="4">AtTPS25</shortName>
        <ecNumber>4.2.3.-</ecNumber>
    </recommendedName>
</protein>
<keyword id="KW-0963">Cytoplasm</keyword>
<keyword id="KW-0456">Lyase</keyword>
<keyword id="KW-0460">Magnesium</keyword>
<keyword id="KW-0464">Manganese</keyword>
<keyword id="KW-0479">Metal-binding</keyword>
<keyword id="KW-1185">Reference proteome</keyword>